<name>METK_AZOPC</name>
<sequence length="424" mass="47510">MSYLFTSESVSEGHPDKVADQISDAILDYFIAYDTNSKVACETLVTSGQIILAGEVKSKVYLDIPEIVREVIEGIGYTKSEYHFESKSSGIISLIHEQSNDISRGIERESPLDQGAGDQGMMFGYATNETANYIPLSLDLSHQLMKELTNIRKYEPELMPYLRPDAKSQVTIRYHDNDIPKSIDTIVISTQHDEFDTAEVMQSKIMKDVRNILIPRIKANYSENIQALFDDKIKYYINPTGKFVIGGPHGDAGLTGRKIIVDTYGGRGAHGGGAFSGKDPSKVDRSAAYAARHIAKNLVAAGVSEEVLVQVSYAIGVTKPINIFVNTYGKSKVKLTDSQIAERVLEIFDLRPKAIENRLKLRNPIYKETAAYGHMGRLPKIVKKVFTPRYANVAKSKDLKKELKVELFTWEKLDYVKKIRKIFQ</sequence>
<accession>B6YRP0</accession>
<keyword id="KW-0067">ATP-binding</keyword>
<keyword id="KW-0963">Cytoplasm</keyword>
<keyword id="KW-0460">Magnesium</keyword>
<keyword id="KW-0479">Metal-binding</keyword>
<keyword id="KW-0547">Nucleotide-binding</keyword>
<keyword id="KW-0554">One-carbon metabolism</keyword>
<keyword id="KW-0630">Potassium</keyword>
<keyword id="KW-1185">Reference proteome</keyword>
<keyword id="KW-0808">Transferase</keyword>
<organism>
    <name type="scientific">Azobacteroides pseudotrichonymphae genomovar. CFP2</name>
    <dbReference type="NCBI Taxonomy" id="511995"/>
    <lineage>
        <taxon>Bacteria</taxon>
        <taxon>Pseudomonadati</taxon>
        <taxon>Bacteroidota</taxon>
        <taxon>Bacteroidia</taxon>
        <taxon>Bacteroidales</taxon>
        <taxon>Candidatus Azobacteroides</taxon>
    </lineage>
</organism>
<proteinExistence type="inferred from homology"/>
<protein>
    <recommendedName>
        <fullName evidence="1">S-adenosylmethionine synthase</fullName>
        <shortName evidence="1">AdoMet synthase</shortName>
        <ecNumber evidence="1">2.5.1.6</ecNumber>
    </recommendedName>
    <alternativeName>
        <fullName evidence="1">MAT</fullName>
    </alternativeName>
    <alternativeName>
        <fullName evidence="1">Methionine adenosyltransferase</fullName>
    </alternativeName>
</protein>
<dbReference type="EC" id="2.5.1.6" evidence="1"/>
<dbReference type="EMBL" id="AP010656">
    <property type="protein sequence ID" value="BAG83862.1"/>
    <property type="molecule type" value="Genomic_DNA"/>
</dbReference>
<dbReference type="RefSeq" id="WP_012573622.1">
    <property type="nucleotide sequence ID" value="NC_011565.1"/>
</dbReference>
<dbReference type="SMR" id="B6YRP0"/>
<dbReference type="STRING" id="511995.CFPG_599"/>
<dbReference type="KEGG" id="aps:CFPG_599"/>
<dbReference type="eggNOG" id="COG0192">
    <property type="taxonomic scope" value="Bacteria"/>
</dbReference>
<dbReference type="HOGENOM" id="CLU_041802_1_1_10"/>
<dbReference type="OrthoDB" id="9801686at2"/>
<dbReference type="UniPathway" id="UPA00315">
    <property type="reaction ID" value="UER00080"/>
</dbReference>
<dbReference type="Proteomes" id="UP000000723">
    <property type="component" value="Chromosome"/>
</dbReference>
<dbReference type="GO" id="GO:0005737">
    <property type="term" value="C:cytoplasm"/>
    <property type="evidence" value="ECO:0007669"/>
    <property type="project" value="UniProtKB-SubCell"/>
</dbReference>
<dbReference type="GO" id="GO:0005524">
    <property type="term" value="F:ATP binding"/>
    <property type="evidence" value="ECO:0007669"/>
    <property type="project" value="UniProtKB-UniRule"/>
</dbReference>
<dbReference type="GO" id="GO:0000287">
    <property type="term" value="F:magnesium ion binding"/>
    <property type="evidence" value="ECO:0007669"/>
    <property type="project" value="UniProtKB-UniRule"/>
</dbReference>
<dbReference type="GO" id="GO:0004478">
    <property type="term" value="F:methionine adenosyltransferase activity"/>
    <property type="evidence" value="ECO:0007669"/>
    <property type="project" value="UniProtKB-UniRule"/>
</dbReference>
<dbReference type="GO" id="GO:0006730">
    <property type="term" value="P:one-carbon metabolic process"/>
    <property type="evidence" value="ECO:0007669"/>
    <property type="project" value="UniProtKB-KW"/>
</dbReference>
<dbReference type="GO" id="GO:0006556">
    <property type="term" value="P:S-adenosylmethionine biosynthetic process"/>
    <property type="evidence" value="ECO:0007669"/>
    <property type="project" value="UniProtKB-UniRule"/>
</dbReference>
<dbReference type="CDD" id="cd18079">
    <property type="entry name" value="S-AdoMet_synt"/>
    <property type="match status" value="1"/>
</dbReference>
<dbReference type="FunFam" id="3.30.300.10:FF:000003">
    <property type="entry name" value="S-adenosylmethionine synthase"/>
    <property type="match status" value="1"/>
</dbReference>
<dbReference type="Gene3D" id="3.30.300.10">
    <property type="match status" value="3"/>
</dbReference>
<dbReference type="HAMAP" id="MF_00086">
    <property type="entry name" value="S_AdoMet_synth1"/>
    <property type="match status" value="1"/>
</dbReference>
<dbReference type="InterPro" id="IPR022631">
    <property type="entry name" value="ADOMET_SYNTHASE_CS"/>
</dbReference>
<dbReference type="InterPro" id="IPR022630">
    <property type="entry name" value="S-AdoMet_synt_C"/>
</dbReference>
<dbReference type="InterPro" id="IPR022629">
    <property type="entry name" value="S-AdoMet_synt_central"/>
</dbReference>
<dbReference type="InterPro" id="IPR022628">
    <property type="entry name" value="S-AdoMet_synt_N"/>
</dbReference>
<dbReference type="InterPro" id="IPR002133">
    <property type="entry name" value="S-AdoMet_synthetase"/>
</dbReference>
<dbReference type="InterPro" id="IPR022636">
    <property type="entry name" value="S-AdoMet_synthetase_sfam"/>
</dbReference>
<dbReference type="NCBIfam" id="TIGR01034">
    <property type="entry name" value="metK"/>
    <property type="match status" value="1"/>
</dbReference>
<dbReference type="PANTHER" id="PTHR11964">
    <property type="entry name" value="S-ADENOSYLMETHIONINE SYNTHETASE"/>
    <property type="match status" value="1"/>
</dbReference>
<dbReference type="Pfam" id="PF02773">
    <property type="entry name" value="S-AdoMet_synt_C"/>
    <property type="match status" value="1"/>
</dbReference>
<dbReference type="Pfam" id="PF02772">
    <property type="entry name" value="S-AdoMet_synt_M"/>
    <property type="match status" value="1"/>
</dbReference>
<dbReference type="Pfam" id="PF00438">
    <property type="entry name" value="S-AdoMet_synt_N"/>
    <property type="match status" value="1"/>
</dbReference>
<dbReference type="PIRSF" id="PIRSF000497">
    <property type="entry name" value="MAT"/>
    <property type="match status" value="1"/>
</dbReference>
<dbReference type="SUPFAM" id="SSF55973">
    <property type="entry name" value="S-adenosylmethionine synthetase"/>
    <property type="match status" value="3"/>
</dbReference>
<dbReference type="PROSITE" id="PS00376">
    <property type="entry name" value="ADOMET_SYNTHASE_1"/>
    <property type="match status" value="1"/>
</dbReference>
<dbReference type="PROSITE" id="PS00377">
    <property type="entry name" value="ADOMET_SYNTHASE_2"/>
    <property type="match status" value="1"/>
</dbReference>
<comment type="function">
    <text evidence="1">Catalyzes the formation of S-adenosylmethionine (AdoMet) from methionine and ATP. The overall synthetic reaction is composed of two sequential steps, AdoMet formation and the subsequent tripolyphosphate hydrolysis which occurs prior to release of AdoMet from the enzyme.</text>
</comment>
<comment type="catalytic activity">
    <reaction evidence="1">
        <text>L-methionine + ATP + H2O = S-adenosyl-L-methionine + phosphate + diphosphate</text>
        <dbReference type="Rhea" id="RHEA:21080"/>
        <dbReference type="ChEBI" id="CHEBI:15377"/>
        <dbReference type="ChEBI" id="CHEBI:30616"/>
        <dbReference type="ChEBI" id="CHEBI:33019"/>
        <dbReference type="ChEBI" id="CHEBI:43474"/>
        <dbReference type="ChEBI" id="CHEBI:57844"/>
        <dbReference type="ChEBI" id="CHEBI:59789"/>
        <dbReference type="EC" id="2.5.1.6"/>
    </reaction>
</comment>
<comment type="cofactor">
    <cofactor evidence="1">
        <name>Mg(2+)</name>
        <dbReference type="ChEBI" id="CHEBI:18420"/>
    </cofactor>
    <text evidence="1">Binds 2 divalent ions per subunit.</text>
</comment>
<comment type="cofactor">
    <cofactor evidence="1">
        <name>K(+)</name>
        <dbReference type="ChEBI" id="CHEBI:29103"/>
    </cofactor>
    <text evidence="1">Binds 1 potassium ion per subunit.</text>
</comment>
<comment type="pathway">
    <text evidence="1">Amino-acid biosynthesis; S-adenosyl-L-methionine biosynthesis; S-adenosyl-L-methionine from L-methionine: step 1/1.</text>
</comment>
<comment type="subunit">
    <text evidence="1">Homotetramer; dimer of dimers.</text>
</comment>
<comment type="subcellular location">
    <subcellularLocation>
        <location evidence="1">Cytoplasm</location>
    </subcellularLocation>
</comment>
<comment type="similarity">
    <text evidence="1">Belongs to the AdoMet synthase family.</text>
</comment>
<reference key="1">
    <citation type="journal article" date="2008" name="Science">
        <title>Genome of an endosymbiont coupling N2 fixation to cellulolysis within RT protist cells in termite gut.</title>
        <authorList>
            <person name="Hongoh Y."/>
            <person name="Sharma V.K."/>
            <person name="Prakash T."/>
            <person name="Noda S."/>
            <person name="Toh H."/>
            <person name="Taylor T.D."/>
            <person name="Kudo T."/>
            <person name="Sakaki Y."/>
            <person name="Toyoda A."/>
            <person name="Hattori M."/>
            <person name="Ohkuma M."/>
        </authorList>
    </citation>
    <scope>NUCLEOTIDE SEQUENCE [LARGE SCALE GENOMIC DNA]</scope>
</reference>
<gene>
    <name evidence="1" type="primary">metK</name>
    <name type="ordered locus">CFPG_599</name>
</gene>
<evidence type="ECO:0000255" key="1">
    <source>
        <dbReference type="HAMAP-Rule" id="MF_00086"/>
    </source>
</evidence>
<feature type="chain" id="PRO_1000093024" description="S-adenosylmethionine synthase">
    <location>
        <begin position="1"/>
        <end position="424"/>
    </location>
</feature>
<feature type="region of interest" description="Flexible loop" evidence="1">
    <location>
        <begin position="98"/>
        <end position="108"/>
    </location>
</feature>
<feature type="binding site" description="in other chain" evidence="1">
    <location>
        <position position="14"/>
    </location>
    <ligand>
        <name>ATP</name>
        <dbReference type="ChEBI" id="CHEBI:30616"/>
        <note>ligand shared between two neighboring subunits</note>
    </ligand>
</feature>
<feature type="binding site" evidence="1">
    <location>
        <position position="16"/>
    </location>
    <ligand>
        <name>Mg(2+)</name>
        <dbReference type="ChEBI" id="CHEBI:18420"/>
    </ligand>
</feature>
<feature type="binding site" evidence="1">
    <location>
        <position position="42"/>
    </location>
    <ligand>
        <name>K(+)</name>
        <dbReference type="ChEBI" id="CHEBI:29103"/>
    </ligand>
</feature>
<feature type="binding site" description="in other chain" evidence="1">
    <location>
        <position position="55"/>
    </location>
    <ligand>
        <name>L-methionine</name>
        <dbReference type="ChEBI" id="CHEBI:57844"/>
        <note>ligand shared between two neighboring subunits</note>
    </ligand>
</feature>
<feature type="binding site" description="in other chain" evidence="1">
    <location>
        <position position="98"/>
    </location>
    <ligand>
        <name>L-methionine</name>
        <dbReference type="ChEBI" id="CHEBI:57844"/>
        <note>ligand shared between two neighboring subunits</note>
    </ligand>
</feature>
<feature type="binding site" description="in other chain" evidence="1">
    <location>
        <begin position="165"/>
        <end position="167"/>
    </location>
    <ligand>
        <name>ATP</name>
        <dbReference type="ChEBI" id="CHEBI:30616"/>
        <note>ligand shared between two neighboring subunits</note>
    </ligand>
</feature>
<feature type="binding site" description="in other chain" evidence="1">
    <location>
        <begin position="242"/>
        <end position="243"/>
    </location>
    <ligand>
        <name>ATP</name>
        <dbReference type="ChEBI" id="CHEBI:30616"/>
        <note>ligand shared between two neighboring subunits</note>
    </ligand>
</feature>
<feature type="binding site" evidence="1">
    <location>
        <position position="251"/>
    </location>
    <ligand>
        <name>ATP</name>
        <dbReference type="ChEBI" id="CHEBI:30616"/>
        <note>ligand shared between two neighboring subunits</note>
    </ligand>
</feature>
<feature type="binding site" evidence="1">
    <location>
        <position position="251"/>
    </location>
    <ligand>
        <name>L-methionine</name>
        <dbReference type="ChEBI" id="CHEBI:57844"/>
        <note>ligand shared between two neighboring subunits</note>
    </ligand>
</feature>
<feature type="binding site" description="in other chain" evidence="1">
    <location>
        <begin position="257"/>
        <end position="258"/>
    </location>
    <ligand>
        <name>ATP</name>
        <dbReference type="ChEBI" id="CHEBI:30616"/>
        <note>ligand shared between two neighboring subunits</note>
    </ligand>
</feature>
<feature type="binding site" evidence="1">
    <location>
        <position position="274"/>
    </location>
    <ligand>
        <name>ATP</name>
        <dbReference type="ChEBI" id="CHEBI:30616"/>
        <note>ligand shared between two neighboring subunits</note>
    </ligand>
</feature>
<feature type="binding site" evidence="1">
    <location>
        <position position="278"/>
    </location>
    <ligand>
        <name>ATP</name>
        <dbReference type="ChEBI" id="CHEBI:30616"/>
        <note>ligand shared between two neighboring subunits</note>
    </ligand>
</feature>
<feature type="binding site" description="in other chain" evidence="1">
    <location>
        <position position="282"/>
    </location>
    <ligand>
        <name>L-methionine</name>
        <dbReference type="ChEBI" id="CHEBI:57844"/>
        <note>ligand shared between two neighboring subunits</note>
    </ligand>
</feature>